<protein>
    <recommendedName>
        <fullName evidence="1">Small ribosomal subunit protein uS2</fullName>
    </recommendedName>
    <alternativeName>
        <fullName evidence="2">30S ribosomal protein S2</fullName>
    </alternativeName>
</protein>
<accession>B9IVB6</accession>
<keyword id="KW-0687">Ribonucleoprotein</keyword>
<keyword id="KW-0689">Ribosomal protein</keyword>
<feature type="chain" id="PRO_1000194318" description="Small ribosomal subunit protein uS2">
    <location>
        <begin position="1"/>
        <end position="233"/>
    </location>
</feature>
<organism>
    <name type="scientific">Bacillus cereus (strain Q1)</name>
    <dbReference type="NCBI Taxonomy" id="361100"/>
    <lineage>
        <taxon>Bacteria</taxon>
        <taxon>Bacillati</taxon>
        <taxon>Bacillota</taxon>
        <taxon>Bacilli</taxon>
        <taxon>Bacillales</taxon>
        <taxon>Bacillaceae</taxon>
        <taxon>Bacillus</taxon>
        <taxon>Bacillus cereus group</taxon>
    </lineage>
</organism>
<dbReference type="EMBL" id="CP000227">
    <property type="protein sequence ID" value="ACM14040.1"/>
    <property type="molecule type" value="Genomic_DNA"/>
</dbReference>
<dbReference type="SMR" id="B9IVB6"/>
<dbReference type="KEGG" id="bcq:BCQ_3612"/>
<dbReference type="HOGENOM" id="CLU_040318_1_2_9"/>
<dbReference type="Proteomes" id="UP000000441">
    <property type="component" value="Chromosome"/>
</dbReference>
<dbReference type="GO" id="GO:0022627">
    <property type="term" value="C:cytosolic small ribosomal subunit"/>
    <property type="evidence" value="ECO:0007669"/>
    <property type="project" value="TreeGrafter"/>
</dbReference>
<dbReference type="GO" id="GO:0003735">
    <property type="term" value="F:structural constituent of ribosome"/>
    <property type="evidence" value="ECO:0007669"/>
    <property type="project" value="InterPro"/>
</dbReference>
<dbReference type="GO" id="GO:0006412">
    <property type="term" value="P:translation"/>
    <property type="evidence" value="ECO:0007669"/>
    <property type="project" value="UniProtKB-UniRule"/>
</dbReference>
<dbReference type="CDD" id="cd01425">
    <property type="entry name" value="RPS2"/>
    <property type="match status" value="1"/>
</dbReference>
<dbReference type="FunFam" id="1.10.287.610:FF:000001">
    <property type="entry name" value="30S ribosomal protein S2"/>
    <property type="match status" value="1"/>
</dbReference>
<dbReference type="Gene3D" id="3.40.50.10490">
    <property type="entry name" value="Glucose-6-phosphate isomerase like protein, domain 1"/>
    <property type="match status" value="1"/>
</dbReference>
<dbReference type="Gene3D" id="1.10.287.610">
    <property type="entry name" value="Helix hairpin bin"/>
    <property type="match status" value="1"/>
</dbReference>
<dbReference type="HAMAP" id="MF_00291_B">
    <property type="entry name" value="Ribosomal_uS2_B"/>
    <property type="match status" value="1"/>
</dbReference>
<dbReference type="InterPro" id="IPR001865">
    <property type="entry name" value="Ribosomal_uS2"/>
</dbReference>
<dbReference type="InterPro" id="IPR005706">
    <property type="entry name" value="Ribosomal_uS2_bac/mit/plastid"/>
</dbReference>
<dbReference type="InterPro" id="IPR018130">
    <property type="entry name" value="Ribosomal_uS2_CS"/>
</dbReference>
<dbReference type="InterPro" id="IPR023591">
    <property type="entry name" value="Ribosomal_uS2_flav_dom_sf"/>
</dbReference>
<dbReference type="NCBIfam" id="TIGR01011">
    <property type="entry name" value="rpsB_bact"/>
    <property type="match status" value="1"/>
</dbReference>
<dbReference type="PANTHER" id="PTHR12534">
    <property type="entry name" value="30S RIBOSOMAL PROTEIN S2 PROKARYOTIC AND ORGANELLAR"/>
    <property type="match status" value="1"/>
</dbReference>
<dbReference type="PANTHER" id="PTHR12534:SF0">
    <property type="entry name" value="SMALL RIBOSOMAL SUBUNIT PROTEIN US2M"/>
    <property type="match status" value="1"/>
</dbReference>
<dbReference type="Pfam" id="PF00318">
    <property type="entry name" value="Ribosomal_S2"/>
    <property type="match status" value="1"/>
</dbReference>
<dbReference type="PRINTS" id="PR00395">
    <property type="entry name" value="RIBOSOMALS2"/>
</dbReference>
<dbReference type="SUPFAM" id="SSF52313">
    <property type="entry name" value="Ribosomal protein S2"/>
    <property type="match status" value="1"/>
</dbReference>
<dbReference type="PROSITE" id="PS00962">
    <property type="entry name" value="RIBOSOMAL_S2_1"/>
    <property type="match status" value="1"/>
</dbReference>
<dbReference type="PROSITE" id="PS00963">
    <property type="entry name" value="RIBOSOMAL_S2_2"/>
    <property type="match status" value="1"/>
</dbReference>
<evidence type="ECO:0000255" key="1">
    <source>
        <dbReference type="HAMAP-Rule" id="MF_00291"/>
    </source>
</evidence>
<evidence type="ECO:0000305" key="2"/>
<reference key="1">
    <citation type="journal article" date="2009" name="J. Bacteriol.">
        <title>Complete genome sequence of the extremophilic Bacillus cereus strain Q1 with industrial applications.</title>
        <authorList>
            <person name="Xiong Z."/>
            <person name="Jiang Y."/>
            <person name="Qi D."/>
            <person name="Lu H."/>
            <person name="Yang F."/>
            <person name="Yang J."/>
            <person name="Chen L."/>
            <person name="Sun L."/>
            <person name="Xu X."/>
            <person name="Xue Y."/>
            <person name="Zhu Y."/>
            <person name="Jin Q."/>
        </authorList>
    </citation>
    <scope>NUCLEOTIDE SEQUENCE [LARGE SCALE GENOMIC DNA]</scope>
    <source>
        <strain>Q1</strain>
    </source>
</reference>
<comment type="similarity">
    <text evidence="1">Belongs to the universal ribosomal protein uS2 family.</text>
</comment>
<name>RS2_BACCQ</name>
<proteinExistence type="inferred from homology"/>
<gene>
    <name evidence="1" type="primary">rpsB</name>
    <name type="ordered locus">BCQ_3612</name>
</gene>
<sequence length="233" mass="26517">MSVISMKQLLEAGVHFGHQTRRWNPKMKRYIFTERNGIYIIDLQKTVKKVEEAFKVMRDIAAEGGDILFVGTKKQAQEAIKEEATRAGMYFVNQRWLGGTLTNFQTIQKRIKRLKDIERMQEDGTFEVLPKKEVVQLKKELERLEKFLGGIKDMKGLPSALFVVDPRKERIAVAEARKLHIPIIGIVDTNCDPDEIDHVIPANDDAIRAVKLLTSKMADAILEAKQGEETVTA</sequence>